<sequence>MRASQSPMLDPRARHLLRTLIARYIRDGEPVGSKTLAQHAGLDVSPATIRNILADLEDIGLLSSPHTSAGRVPTAHGYRVFVDSLVQMQPPGEEEVRRLRAELASSNGTQSLLGSASQMLSAMSHFVGVVSAPRREQFAFRHIDFVPLDARRVLAILVFADNEVQNRVIEPRRAYEPAELERVANYLNAQFAGRALSDIRASLLRELRLAKNEMEQLLAHSVDLASEALVPADDDGMVMAGQTRLMGVQDLSDLDRLRELFEAFASKREILQLLERTIQAPGVRIFIGEETGMVSLDDVSLVTAPYTAGGQVLGVLGVIGPKRMAYDRVIPLVQTAAQMLGAAMEPPGTR</sequence>
<reference key="1">
    <citation type="journal article" date="2001" name="Arch. Microbiol.">
        <title>Characterization of stress-responsive genes, hrcA-grpE-dnaK-dnaJ, from phytopathogenic Xanthomonas campestris.</title>
        <authorList>
            <person name="Weng S.-F."/>
            <person name="Tai P.-M."/>
            <person name="Yang C.-H."/>
            <person name="Wu C.-D."/>
            <person name="Tsai W.-J."/>
            <person name="Lin J.-W."/>
            <person name="Tseng Y.-H."/>
        </authorList>
    </citation>
    <scope>NUCLEOTIDE SEQUENCE [GENOMIC DNA]</scope>
</reference>
<reference key="2">
    <citation type="journal article" date="2002" name="Nature">
        <title>Comparison of the genomes of two Xanthomonas pathogens with differing host specificities.</title>
        <authorList>
            <person name="da Silva A.C.R."/>
            <person name="Ferro J.A."/>
            <person name="Reinach F.C."/>
            <person name="Farah C.S."/>
            <person name="Furlan L.R."/>
            <person name="Quaggio R.B."/>
            <person name="Monteiro-Vitorello C.B."/>
            <person name="Van Sluys M.A."/>
            <person name="Almeida N.F. Jr."/>
            <person name="Alves L.M.C."/>
            <person name="do Amaral A.M."/>
            <person name="Bertolini M.C."/>
            <person name="Camargo L.E.A."/>
            <person name="Camarotte G."/>
            <person name="Cannavan F."/>
            <person name="Cardozo J."/>
            <person name="Chambergo F."/>
            <person name="Ciapina L.P."/>
            <person name="Cicarelli R.M.B."/>
            <person name="Coutinho L.L."/>
            <person name="Cursino-Santos J.R."/>
            <person name="El-Dorry H."/>
            <person name="Faria J.B."/>
            <person name="Ferreira A.J.S."/>
            <person name="Ferreira R.C.C."/>
            <person name="Ferro M.I.T."/>
            <person name="Formighieri E.F."/>
            <person name="Franco M.C."/>
            <person name="Greggio C.C."/>
            <person name="Gruber A."/>
            <person name="Katsuyama A.M."/>
            <person name="Kishi L.T."/>
            <person name="Leite R.P."/>
            <person name="Lemos E.G.M."/>
            <person name="Lemos M.V.F."/>
            <person name="Locali E.C."/>
            <person name="Machado M.A."/>
            <person name="Madeira A.M.B.N."/>
            <person name="Martinez-Rossi N.M."/>
            <person name="Martins E.C."/>
            <person name="Meidanis J."/>
            <person name="Menck C.F.M."/>
            <person name="Miyaki C.Y."/>
            <person name="Moon D.H."/>
            <person name="Moreira L.M."/>
            <person name="Novo M.T.M."/>
            <person name="Okura V.K."/>
            <person name="Oliveira M.C."/>
            <person name="Oliveira V.R."/>
            <person name="Pereira H.A."/>
            <person name="Rossi A."/>
            <person name="Sena J.A.D."/>
            <person name="Silva C."/>
            <person name="de Souza R.F."/>
            <person name="Spinola L.A.F."/>
            <person name="Takita M.A."/>
            <person name="Tamura R.E."/>
            <person name="Teixeira E.C."/>
            <person name="Tezza R.I.D."/>
            <person name="Trindade dos Santos M."/>
            <person name="Truffi D."/>
            <person name="Tsai S.M."/>
            <person name="White F.F."/>
            <person name="Setubal J.C."/>
            <person name="Kitajima J.P."/>
        </authorList>
    </citation>
    <scope>NUCLEOTIDE SEQUENCE [LARGE SCALE GENOMIC DNA]</scope>
    <source>
        <strain>ATCC 33913 / DSM 3586 / NCPPB 528 / LMG 568 / P 25</strain>
    </source>
</reference>
<organism>
    <name type="scientific">Xanthomonas campestris pv. campestris (strain ATCC 33913 / DSM 3586 / NCPPB 528 / LMG 568 / P 25)</name>
    <dbReference type="NCBI Taxonomy" id="190485"/>
    <lineage>
        <taxon>Bacteria</taxon>
        <taxon>Pseudomonadati</taxon>
        <taxon>Pseudomonadota</taxon>
        <taxon>Gammaproteobacteria</taxon>
        <taxon>Lysobacterales</taxon>
        <taxon>Lysobacteraceae</taxon>
        <taxon>Xanthomonas</taxon>
    </lineage>
</organism>
<keyword id="KW-1185">Reference proteome</keyword>
<keyword id="KW-0678">Repressor</keyword>
<keyword id="KW-0346">Stress response</keyword>
<keyword id="KW-0804">Transcription</keyword>
<keyword id="KW-0805">Transcription regulation</keyword>
<gene>
    <name evidence="1" type="primary">hrcA</name>
    <name type="ordered locus">XCC1472</name>
</gene>
<name>HRCA_XANCP</name>
<proteinExistence type="inferred from homology"/>
<feature type="chain" id="PRO_0000182556" description="Heat-inducible transcription repressor HrcA">
    <location>
        <begin position="1"/>
        <end position="350"/>
    </location>
</feature>
<feature type="sequence conflict" description="In Ref. 1; AAG53934." evidence="2" ref="1">
    <original>DDG</original>
    <variation>ADD</variation>
    <location>
        <begin position="234"/>
        <end position="236"/>
    </location>
</feature>
<protein>
    <recommendedName>
        <fullName evidence="1">Heat-inducible transcription repressor HrcA</fullName>
    </recommendedName>
</protein>
<accession>Q8PAL1</accession>
<accession>Q93TY0</accession>
<comment type="function">
    <text evidence="1">Negative regulator of class I heat shock genes (grpE-dnaK-dnaJ and groELS operons). Prevents heat-shock induction of these operons.</text>
</comment>
<comment type="similarity">
    <text evidence="1">Belongs to the HrcA family.</text>
</comment>
<comment type="sequence caution" evidence="2">
    <conflict type="erroneous initiation">
        <sequence resource="EMBL-CDS" id="AAM40768"/>
    </conflict>
</comment>
<dbReference type="EMBL" id="AF302775">
    <property type="protein sequence ID" value="AAG53934.2"/>
    <property type="molecule type" value="Genomic_DNA"/>
</dbReference>
<dbReference type="EMBL" id="AE008922">
    <property type="protein sequence ID" value="AAM40768.1"/>
    <property type="status" value="ALT_INIT"/>
    <property type="molecule type" value="Genomic_DNA"/>
</dbReference>
<dbReference type="RefSeq" id="NP_636844.1">
    <property type="nucleotide sequence ID" value="NC_003902.1"/>
</dbReference>
<dbReference type="SMR" id="Q8PAL1"/>
<dbReference type="STRING" id="190485.XCC1472"/>
<dbReference type="EnsemblBacteria" id="AAM40768">
    <property type="protein sequence ID" value="AAM40768"/>
    <property type="gene ID" value="XCC1472"/>
</dbReference>
<dbReference type="KEGG" id="xcc:XCC1472"/>
<dbReference type="PATRIC" id="fig|190485.4.peg.1576"/>
<dbReference type="eggNOG" id="COG1420">
    <property type="taxonomic scope" value="Bacteria"/>
</dbReference>
<dbReference type="HOGENOM" id="CLU_050019_0_0_6"/>
<dbReference type="OrthoDB" id="9783139at2"/>
<dbReference type="Proteomes" id="UP000001010">
    <property type="component" value="Chromosome"/>
</dbReference>
<dbReference type="GO" id="GO:0003677">
    <property type="term" value="F:DNA binding"/>
    <property type="evidence" value="ECO:0007669"/>
    <property type="project" value="InterPro"/>
</dbReference>
<dbReference type="GO" id="GO:0045892">
    <property type="term" value="P:negative regulation of DNA-templated transcription"/>
    <property type="evidence" value="ECO:0000318"/>
    <property type="project" value="GO_Central"/>
</dbReference>
<dbReference type="Gene3D" id="3.30.450.40">
    <property type="match status" value="1"/>
</dbReference>
<dbReference type="Gene3D" id="3.30.390.60">
    <property type="entry name" value="Heat-inducible transcription repressor hrca homolog, domain 3"/>
    <property type="match status" value="1"/>
</dbReference>
<dbReference type="Gene3D" id="1.10.10.10">
    <property type="entry name" value="Winged helix-like DNA-binding domain superfamily/Winged helix DNA-binding domain"/>
    <property type="match status" value="1"/>
</dbReference>
<dbReference type="HAMAP" id="MF_00081">
    <property type="entry name" value="HrcA"/>
    <property type="match status" value="1"/>
</dbReference>
<dbReference type="InterPro" id="IPR029016">
    <property type="entry name" value="GAF-like_dom_sf"/>
</dbReference>
<dbReference type="InterPro" id="IPR002571">
    <property type="entry name" value="HrcA"/>
</dbReference>
<dbReference type="InterPro" id="IPR021153">
    <property type="entry name" value="HrcA_C"/>
</dbReference>
<dbReference type="InterPro" id="IPR036388">
    <property type="entry name" value="WH-like_DNA-bd_sf"/>
</dbReference>
<dbReference type="InterPro" id="IPR036390">
    <property type="entry name" value="WH_DNA-bd_sf"/>
</dbReference>
<dbReference type="InterPro" id="IPR005104">
    <property type="entry name" value="WHTH_HrcA_DNA-bd"/>
</dbReference>
<dbReference type="InterPro" id="IPR023120">
    <property type="entry name" value="WHTH_transcript_rep_HrcA_IDD"/>
</dbReference>
<dbReference type="NCBIfam" id="TIGR00331">
    <property type="entry name" value="hrcA"/>
    <property type="match status" value="1"/>
</dbReference>
<dbReference type="PANTHER" id="PTHR34824">
    <property type="entry name" value="HEAT-INDUCIBLE TRANSCRIPTION REPRESSOR HRCA"/>
    <property type="match status" value="1"/>
</dbReference>
<dbReference type="PANTHER" id="PTHR34824:SF1">
    <property type="entry name" value="HEAT-INDUCIBLE TRANSCRIPTION REPRESSOR HRCA"/>
    <property type="match status" value="1"/>
</dbReference>
<dbReference type="Pfam" id="PF01628">
    <property type="entry name" value="HrcA"/>
    <property type="match status" value="1"/>
</dbReference>
<dbReference type="Pfam" id="PF03444">
    <property type="entry name" value="HrcA_DNA-bdg"/>
    <property type="match status" value="1"/>
</dbReference>
<dbReference type="PIRSF" id="PIRSF005485">
    <property type="entry name" value="HrcA"/>
    <property type="match status" value="1"/>
</dbReference>
<dbReference type="SUPFAM" id="SSF55781">
    <property type="entry name" value="GAF domain-like"/>
    <property type="match status" value="1"/>
</dbReference>
<dbReference type="SUPFAM" id="SSF46785">
    <property type="entry name" value="Winged helix' DNA-binding domain"/>
    <property type="match status" value="1"/>
</dbReference>
<evidence type="ECO:0000255" key="1">
    <source>
        <dbReference type="HAMAP-Rule" id="MF_00081"/>
    </source>
</evidence>
<evidence type="ECO:0000305" key="2"/>